<reference key="1">
    <citation type="journal article" date="2000" name="Nature">
        <title>Complete genome sequence of Pseudomonas aeruginosa PAO1, an opportunistic pathogen.</title>
        <authorList>
            <person name="Stover C.K."/>
            <person name="Pham X.-Q.T."/>
            <person name="Erwin A.L."/>
            <person name="Mizoguchi S.D."/>
            <person name="Warrener P."/>
            <person name="Hickey M.J."/>
            <person name="Brinkman F.S.L."/>
            <person name="Hufnagle W.O."/>
            <person name="Kowalik D.J."/>
            <person name="Lagrou M."/>
            <person name="Garber R.L."/>
            <person name="Goltry L."/>
            <person name="Tolentino E."/>
            <person name="Westbrock-Wadman S."/>
            <person name="Yuan Y."/>
            <person name="Brody L.L."/>
            <person name="Coulter S.N."/>
            <person name="Folger K.R."/>
            <person name="Kas A."/>
            <person name="Larbig K."/>
            <person name="Lim R.M."/>
            <person name="Smith K.A."/>
            <person name="Spencer D.H."/>
            <person name="Wong G.K.-S."/>
            <person name="Wu Z."/>
            <person name="Paulsen I.T."/>
            <person name="Reizer J."/>
            <person name="Saier M.H. Jr."/>
            <person name="Hancock R.E.W."/>
            <person name="Lory S."/>
            <person name="Olson M.V."/>
        </authorList>
    </citation>
    <scope>NUCLEOTIDE SEQUENCE [LARGE SCALE GENOMIC DNA]</scope>
    <source>
        <strain>ATCC 15692 / DSM 22644 / CIP 104116 / JCM 14847 / LMG 12228 / 1C / PRS 101 / PAO1</strain>
    </source>
</reference>
<sequence>MSDSRLVDPFGRRITYLRLSVTDRCDFRCTYCMSEDMQFLPRDQVLSLEELYAVADAFIGLGVRRIRITGGEPLVRKGITGLLARLGQRAELEDLAITTNGSQLRERAAELKAAGVRRLNVSLDSLQRERFAAFTRSDRLEQVLDGIQAAREAGFERIKLNCVVQKGRNDDEILDLVEYALANQLDISFIEEMPLGSITSHRRELTLCTSDEVRAIIERRWPLTPSLARSGGPSRYYQIGDEPSRIGFISPHSNNFCGDCNRVRVTAEGKLVLCLGHEGALDLRELLRSHPGDRERLSAALVAALNLKPERHHFDAQEQVQVLRFMSMTGG</sequence>
<dbReference type="EC" id="4.1.99.22" evidence="1"/>
<dbReference type="EMBL" id="AE004091">
    <property type="protein sequence ID" value="AAG04894.1"/>
    <property type="molecule type" value="Genomic_DNA"/>
</dbReference>
<dbReference type="PIR" id="E83457">
    <property type="entry name" value="E83457"/>
</dbReference>
<dbReference type="RefSeq" id="NP_250196.1">
    <property type="nucleotide sequence ID" value="NC_002516.2"/>
</dbReference>
<dbReference type="SMR" id="Q9I3K7"/>
<dbReference type="FunCoup" id="Q9I3K7">
    <property type="interactions" value="564"/>
</dbReference>
<dbReference type="STRING" id="208964.PA1505"/>
<dbReference type="PaxDb" id="208964-PA1505"/>
<dbReference type="DNASU" id="883031"/>
<dbReference type="GeneID" id="883031"/>
<dbReference type="KEGG" id="pae:PA1505"/>
<dbReference type="PATRIC" id="fig|208964.12.peg.1557"/>
<dbReference type="PseudoCAP" id="PA1505"/>
<dbReference type="HOGENOM" id="CLU_009273_0_1_6"/>
<dbReference type="InParanoid" id="Q9I3K7"/>
<dbReference type="OrthoDB" id="9763993at2"/>
<dbReference type="PhylomeDB" id="Q9I3K7"/>
<dbReference type="BioCyc" id="PAER208964:G1FZ6-1532-MONOMER"/>
<dbReference type="UniPathway" id="UPA00344"/>
<dbReference type="Proteomes" id="UP000002438">
    <property type="component" value="Chromosome"/>
</dbReference>
<dbReference type="GO" id="GO:0051539">
    <property type="term" value="F:4 iron, 4 sulfur cluster binding"/>
    <property type="evidence" value="ECO:0007669"/>
    <property type="project" value="UniProtKB-UniRule"/>
</dbReference>
<dbReference type="GO" id="GO:0061799">
    <property type="term" value="F:cyclic pyranopterin monophosphate synthase activity"/>
    <property type="evidence" value="ECO:0000318"/>
    <property type="project" value="GO_Central"/>
</dbReference>
<dbReference type="GO" id="GO:0061798">
    <property type="term" value="F:GTP 3',8'-cyclase activity"/>
    <property type="evidence" value="ECO:0000318"/>
    <property type="project" value="GO_Central"/>
</dbReference>
<dbReference type="GO" id="GO:0005525">
    <property type="term" value="F:GTP binding"/>
    <property type="evidence" value="ECO:0007669"/>
    <property type="project" value="UniProtKB-UniRule"/>
</dbReference>
<dbReference type="GO" id="GO:0046872">
    <property type="term" value="F:metal ion binding"/>
    <property type="evidence" value="ECO:0007669"/>
    <property type="project" value="UniProtKB-KW"/>
</dbReference>
<dbReference type="GO" id="GO:1904047">
    <property type="term" value="F:S-adenosyl-L-methionine binding"/>
    <property type="evidence" value="ECO:0007669"/>
    <property type="project" value="UniProtKB-UniRule"/>
</dbReference>
<dbReference type="GO" id="GO:0006777">
    <property type="term" value="P:Mo-molybdopterin cofactor biosynthetic process"/>
    <property type="evidence" value="ECO:0000318"/>
    <property type="project" value="GO_Central"/>
</dbReference>
<dbReference type="CDD" id="cd01335">
    <property type="entry name" value="Radical_SAM"/>
    <property type="match status" value="1"/>
</dbReference>
<dbReference type="CDD" id="cd21117">
    <property type="entry name" value="Twitch_MoaA"/>
    <property type="match status" value="1"/>
</dbReference>
<dbReference type="Gene3D" id="3.20.20.70">
    <property type="entry name" value="Aldolase class I"/>
    <property type="match status" value="1"/>
</dbReference>
<dbReference type="HAMAP" id="MF_01225_B">
    <property type="entry name" value="MoaA_B"/>
    <property type="match status" value="1"/>
</dbReference>
<dbReference type="InterPro" id="IPR013785">
    <property type="entry name" value="Aldolase_TIM"/>
</dbReference>
<dbReference type="InterPro" id="IPR006638">
    <property type="entry name" value="Elp3/MiaA/NifB-like_rSAM"/>
</dbReference>
<dbReference type="InterPro" id="IPR013483">
    <property type="entry name" value="MoaA"/>
</dbReference>
<dbReference type="InterPro" id="IPR000385">
    <property type="entry name" value="MoaA_NifB_PqqE_Fe-S-bd_CS"/>
</dbReference>
<dbReference type="InterPro" id="IPR010505">
    <property type="entry name" value="MoaA_twitch"/>
</dbReference>
<dbReference type="InterPro" id="IPR050105">
    <property type="entry name" value="MoCo_biosynth_MoaA/MoaC"/>
</dbReference>
<dbReference type="InterPro" id="IPR007197">
    <property type="entry name" value="rSAM"/>
</dbReference>
<dbReference type="NCBIfam" id="TIGR02666">
    <property type="entry name" value="moaA"/>
    <property type="match status" value="1"/>
</dbReference>
<dbReference type="PANTHER" id="PTHR22960:SF0">
    <property type="entry name" value="MOLYBDENUM COFACTOR BIOSYNTHESIS PROTEIN 1"/>
    <property type="match status" value="1"/>
</dbReference>
<dbReference type="PANTHER" id="PTHR22960">
    <property type="entry name" value="MOLYBDOPTERIN COFACTOR SYNTHESIS PROTEIN A"/>
    <property type="match status" value="1"/>
</dbReference>
<dbReference type="Pfam" id="PF13353">
    <property type="entry name" value="Fer4_12"/>
    <property type="match status" value="1"/>
</dbReference>
<dbReference type="Pfam" id="PF06463">
    <property type="entry name" value="Mob_synth_C"/>
    <property type="match status" value="1"/>
</dbReference>
<dbReference type="Pfam" id="PF04055">
    <property type="entry name" value="Radical_SAM"/>
    <property type="match status" value="1"/>
</dbReference>
<dbReference type="SFLD" id="SFLDG01383">
    <property type="entry name" value="cyclic_pyranopterin_phosphate"/>
    <property type="match status" value="1"/>
</dbReference>
<dbReference type="SFLD" id="SFLDG01386">
    <property type="entry name" value="main_SPASM_domain-containing"/>
    <property type="match status" value="1"/>
</dbReference>
<dbReference type="SMART" id="SM00729">
    <property type="entry name" value="Elp3"/>
    <property type="match status" value="1"/>
</dbReference>
<dbReference type="SUPFAM" id="SSF102114">
    <property type="entry name" value="Radical SAM enzymes"/>
    <property type="match status" value="1"/>
</dbReference>
<dbReference type="PROSITE" id="PS01305">
    <property type="entry name" value="MOAA_NIFB_PQQE"/>
    <property type="match status" value="1"/>
</dbReference>
<dbReference type="PROSITE" id="PS51918">
    <property type="entry name" value="RADICAL_SAM"/>
    <property type="match status" value="1"/>
</dbReference>
<feature type="chain" id="PRO_0000152981" description="GTP 3',8-cyclase 2">
    <location>
        <begin position="1"/>
        <end position="331"/>
    </location>
</feature>
<feature type="domain" description="Radical SAM core" evidence="2">
    <location>
        <begin position="9"/>
        <end position="234"/>
    </location>
</feature>
<feature type="binding site" evidence="1">
    <location>
        <position position="18"/>
    </location>
    <ligand>
        <name>GTP</name>
        <dbReference type="ChEBI" id="CHEBI:37565"/>
    </ligand>
</feature>
<feature type="binding site" evidence="1">
    <location>
        <position position="25"/>
    </location>
    <ligand>
        <name>[4Fe-4S] cluster</name>
        <dbReference type="ChEBI" id="CHEBI:49883"/>
        <label>1</label>
        <note>4Fe-4S-S-AdoMet</note>
    </ligand>
</feature>
<feature type="binding site" evidence="1">
    <location>
        <position position="29"/>
    </location>
    <ligand>
        <name>[4Fe-4S] cluster</name>
        <dbReference type="ChEBI" id="CHEBI:49883"/>
        <label>1</label>
        <note>4Fe-4S-S-AdoMet</note>
    </ligand>
</feature>
<feature type="binding site" evidence="1">
    <location>
        <position position="31"/>
    </location>
    <ligand>
        <name>S-adenosyl-L-methionine</name>
        <dbReference type="ChEBI" id="CHEBI:59789"/>
    </ligand>
</feature>
<feature type="binding site" evidence="1">
    <location>
        <position position="32"/>
    </location>
    <ligand>
        <name>[4Fe-4S] cluster</name>
        <dbReference type="ChEBI" id="CHEBI:49883"/>
        <label>1</label>
        <note>4Fe-4S-S-AdoMet</note>
    </ligand>
</feature>
<feature type="binding site" evidence="1">
    <location>
        <position position="67"/>
    </location>
    <ligand>
        <name>GTP</name>
        <dbReference type="ChEBI" id="CHEBI:37565"/>
    </ligand>
</feature>
<feature type="binding site" evidence="1">
    <location>
        <position position="71"/>
    </location>
    <ligand>
        <name>S-adenosyl-L-methionine</name>
        <dbReference type="ChEBI" id="CHEBI:59789"/>
    </ligand>
</feature>
<feature type="binding site" evidence="1">
    <location>
        <position position="98"/>
    </location>
    <ligand>
        <name>GTP</name>
        <dbReference type="ChEBI" id="CHEBI:37565"/>
    </ligand>
</feature>
<feature type="binding site" evidence="1">
    <location>
        <position position="122"/>
    </location>
    <ligand>
        <name>S-adenosyl-L-methionine</name>
        <dbReference type="ChEBI" id="CHEBI:59789"/>
    </ligand>
</feature>
<feature type="binding site" evidence="1">
    <location>
        <position position="159"/>
    </location>
    <ligand>
        <name>GTP</name>
        <dbReference type="ChEBI" id="CHEBI:37565"/>
    </ligand>
</feature>
<feature type="binding site" evidence="1">
    <location>
        <position position="193"/>
    </location>
    <ligand>
        <name>S-adenosyl-L-methionine</name>
        <dbReference type="ChEBI" id="CHEBI:59789"/>
    </ligand>
</feature>
<feature type="binding site" evidence="1">
    <location>
        <position position="257"/>
    </location>
    <ligand>
        <name>[4Fe-4S] cluster</name>
        <dbReference type="ChEBI" id="CHEBI:49883"/>
        <label>2</label>
        <note>4Fe-4S-substrate</note>
    </ligand>
</feature>
<feature type="binding site" evidence="1">
    <location>
        <position position="260"/>
    </location>
    <ligand>
        <name>[4Fe-4S] cluster</name>
        <dbReference type="ChEBI" id="CHEBI:49883"/>
        <label>2</label>
        <note>4Fe-4S-substrate</note>
    </ligand>
</feature>
<feature type="binding site" evidence="1">
    <location>
        <begin position="262"/>
        <end position="264"/>
    </location>
    <ligand>
        <name>GTP</name>
        <dbReference type="ChEBI" id="CHEBI:37565"/>
    </ligand>
</feature>
<feature type="binding site" evidence="1">
    <location>
        <position position="274"/>
    </location>
    <ligand>
        <name>[4Fe-4S] cluster</name>
        <dbReference type="ChEBI" id="CHEBI:49883"/>
        <label>2</label>
        <note>4Fe-4S-substrate</note>
    </ligand>
</feature>
<gene>
    <name type="primary">moaA2</name>
    <name type="ordered locus">PA1505</name>
</gene>
<protein>
    <recommendedName>
        <fullName evidence="1">GTP 3',8-cyclase 2</fullName>
        <ecNumber evidence="1">4.1.99.22</ecNumber>
    </recommendedName>
    <alternativeName>
        <fullName evidence="1">Molybdenum cofactor biosynthesis protein A 2</fullName>
    </alternativeName>
</protein>
<keyword id="KW-0004">4Fe-4S</keyword>
<keyword id="KW-0342">GTP-binding</keyword>
<keyword id="KW-0408">Iron</keyword>
<keyword id="KW-0411">Iron-sulfur</keyword>
<keyword id="KW-0456">Lyase</keyword>
<keyword id="KW-0479">Metal-binding</keyword>
<keyword id="KW-0501">Molybdenum cofactor biosynthesis</keyword>
<keyword id="KW-0547">Nucleotide-binding</keyword>
<keyword id="KW-1185">Reference proteome</keyword>
<keyword id="KW-0949">S-adenosyl-L-methionine</keyword>
<proteinExistence type="inferred from homology"/>
<comment type="function">
    <text evidence="1">Catalyzes the cyclization of GTP to (8S)-3',8-cyclo-7,8-dihydroguanosine 5'-triphosphate.</text>
</comment>
<comment type="catalytic activity">
    <reaction evidence="1">
        <text>GTP + AH2 + S-adenosyl-L-methionine = (8S)-3',8-cyclo-7,8-dihydroguanosine 5'-triphosphate + 5'-deoxyadenosine + L-methionine + A + H(+)</text>
        <dbReference type="Rhea" id="RHEA:49576"/>
        <dbReference type="ChEBI" id="CHEBI:13193"/>
        <dbReference type="ChEBI" id="CHEBI:15378"/>
        <dbReference type="ChEBI" id="CHEBI:17319"/>
        <dbReference type="ChEBI" id="CHEBI:17499"/>
        <dbReference type="ChEBI" id="CHEBI:37565"/>
        <dbReference type="ChEBI" id="CHEBI:57844"/>
        <dbReference type="ChEBI" id="CHEBI:59789"/>
        <dbReference type="ChEBI" id="CHEBI:131766"/>
        <dbReference type="EC" id="4.1.99.22"/>
    </reaction>
</comment>
<comment type="cofactor">
    <cofactor evidence="1">
        <name>[4Fe-4S] cluster</name>
        <dbReference type="ChEBI" id="CHEBI:49883"/>
    </cofactor>
    <text evidence="1">Binds 2 [4Fe-4S] clusters. Binds 1 [4Fe-4S] cluster coordinated with 3 cysteines and an exchangeable S-adenosyl-L-methionine and 1 [4Fe-4S] cluster coordinated with 3 cysteines and the GTP-derived substrate.</text>
</comment>
<comment type="pathway">
    <text evidence="1">Cofactor biosynthesis; molybdopterin biosynthesis.</text>
</comment>
<comment type="subunit">
    <text evidence="1">Monomer and homodimer.</text>
</comment>
<comment type="similarity">
    <text evidence="1">Belongs to the radical SAM superfamily. MoaA family.</text>
</comment>
<organism>
    <name type="scientific">Pseudomonas aeruginosa (strain ATCC 15692 / DSM 22644 / CIP 104116 / JCM 14847 / LMG 12228 / 1C / PRS 101 / PAO1)</name>
    <dbReference type="NCBI Taxonomy" id="208964"/>
    <lineage>
        <taxon>Bacteria</taxon>
        <taxon>Pseudomonadati</taxon>
        <taxon>Pseudomonadota</taxon>
        <taxon>Gammaproteobacteria</taxon>
        <taxon>Pseudomonadales</taxon>
        <taxon>Pseudomonadaceae</taxon>
        <taxon>Pseudomonas</taxon>
    </lineage>
</organism>
<evidence type="ECO:0000255" key="1">
    <source>
        <dbReference type="HAMAP-Rule" id="MF_01225"/>
    </source>
</evidence>
<evidence type="ECO:0000255" key="2">
    <source>
        <dbReference type="PROSITE-ProRule" id="PRU01266"/>
    </source>
</evidence>
<name>MOAA2_PSEAE</name>
<accession>Q9I3K7</accession>